<keyword id="KW-1185">Reference proteome</keyword>
<keyword id="KW-0687">Ribonucleoprotein</keyword>
<keyword id="KW-0689">Ribosomal protein</keyword>
<keyword id="KW-0694">RNA-binding</keyword>
<keyword id="KW-0699">rRNA-binding</keyword>
<dbReference type="EMBL" id="CP000806">
    <property type="protein sequence ID" value="ACB53380.1"/>
    <property type="molecule type" value="Genomic_DNA"/>
</dbReference>
<dbReference type="RefSeq" id="WP_009543880.1">
    <property type="nucleotide sequence ID" value="NC_010546.1"/>
</dbReference>
<dbReference type="SMR" id="B1WQS8"/>
<dbReference type="STRING" id="43989.cce_4032"/>
<dbReference type="KEGG" id="cyt:cce_4032"/>
<dbReference type="eggNOG" id="COG0200">
    <property type="taxonomic scope" value="Bacteria"/>
</dbReference>
<dbReference type="HOGENOM" id="CLU_055188_4_2_3"/>
<dbReference type="OrthoDB" id="9810293at2"/>
<dbReference type="Proteomes" id="UP000001203">
    <property type="component" value="Chromosome circular"/>
</dbReference>
<dbReference type="GO" id="GO:0022625">
    <property type="term" value="C:cytosolic large ribosomal subunit"/>
    <property type="evidence" value="ECO:0007669"/>
    <property type="project" value="TreeGrafter"/>
</dbReference>
<dbReference type="GO" id="GO:0019843">
    <property type="term" value="F:rRNA binding"/>
    <property type="evidence" value="ECO:0007669"/>
    <property type="project" value="UniProtKB-UniRule"/>
</dbReference>
<dbReference type="GO" id="GO:0003735">
    <property type="term" value="F:structural constituent of ribosome"/>
    <property type="evidence" value="ECO:0007669"/>
    <property type="project" value="InterPro"/>
</dbReference>
<dbReference type="GO" id="GO:0006412">
    <property type="term" value="P:translation"/>
    <property type="evidence" value="ECO:0007669"/>
    <property type="project" value="UniProtKB-UniRule"/>
</dbReference>
<dbReference type="Gene3D" id="3.100.10.10">
    <property type="match status" value="1"/>
</dbReference>
<dbReference type="HAMAP" id="MF_01341">
    <property type="entry name" value="Ribosomal_uL15"/>
    <property type="match status" value="1"/>
</dbReference>
<dbReference type="InterPro" id="IPR030878">
    <property type="entry name" value="Ribosomal_uL15"/>
</dbReference>
<dbReference type="InterPro" id="IPR021131">
    <property type="entry name" value="Ribosomal_uL15/eL18"/>
</dbReference>
<dbReference type="InterPro" id="IPR036227">
    <property type="entry name" value="Ribosomal_uL15/eL18_sf"/>
</dbReference>
<dbReference type="InterPro" id="IPR005749">
    <property type="entry name" value="Ribosomal_uL15_bac-type"/>
</dbReference>
<dbReference type="InterPro" id="IPR001196">
    <property type="entry name" value="Ribosomal_uL15_CS"/>
</dbReference>
<dbReference type="NCBIfam" id="TIGR01071">
    <property type="entry name" value="rplO_bact"/>
    <property type="match status" value="1"/>
</dbReference>
<dbReference type="PANTHER" id="PTHR12934">
    <property type="entry name" value="50S RIBOSOMAL PROTEIN L15"/>
    <property type="match status" value="1"/>
</dbReference>
<dbReference type="PANTHER" id="PTHR12934:SF11">
    <property type="entry name" value="LARGE RIBOSOMAL SUBUNIT PROTEIN UL15M"/>
    <property type="match status" value="1"/>
</dbReference>
<dbReference type="Pfam" id="PF00828">
    <property type="entry name" value="Ribosomal_L27A"/>
    <property type="match status" value="1"/>
</dbReference>
<dbReference type="SUPFAM" id="SSF52080">
    <property type="entry name" value="Ribosomal proteins L15p and L18e"/>
    <property type="match status" value="1"/>
</dbReference>
<dbReference type="PROSITE" id="PS00475">
    <property type="entry name" value="RIBOSOMAL_L15"/>
    <property type="match status" value="1"/>
</dbReference>
<organism>
    <name type="scientific">Crocosphaera subtropica (strain ATCC 51142 / BH68)</name>
    <name type="common">Cyanothece sp. (strain ATCC 51142)</name>
    <dbReference type="NCBI Taxonomy" id="43989"/>
    <lineage>
        <taxon>Bacteria</taxon>
        <taxon>Bacillati</taxon>
        <taxon>Cyanobacteriota</taxon>
        <taxon>Cyanophyceae</taxon>
        <taxon>Oscillatoriophycideae</taxon>
        <taxon>Chroococcales</taxon>
        <taxon>Aphanothecaceae</taxon>
        <taxon>Crocosphaera</taxon>
        <taxon>Crocosphaera subtropica</taxon>
    </lineage>
</organism>
<name>RL15_CROS5</name>
<proteinExistence type="inferred from homology"/>
<comment type="function">
    <text evidence="1">Binds to the 23S rRNA.</text>
</comment>
<comment type="subunit">
    <text evidence="1">Part of the 50S ribosomal subunit.</text>
</comment>
<comment type="similarity">
    <text evidence="1">Belongs to the universal ribosomal protein uL15 family.</text>
</comment>
<reference key="1">
    <citation type="journal article" date="2008" name="Proc. Natl. Acad. Sci. U.S.A.">
        <title>The genome of Cyanothece 51142, a unicellular diazotrophic cyanobacterium important in the marine nitrogen cycle.</title>
        <authorList>
            <person name="Welsh E.A."/>
            <person name="Liberton M."/>
            <person name="Stoeckel J."/>
            <person name="Loh T."/>
            <person name="Elvitigala T."/>
            <person name="Wang C."/>
            <person name="Wollam A."/>
            <person name="Fulton R.S."/>
            <person name="Clifton S.W."/>
            <person name="Jacobs J.M."/>
            <person name="Aurora R."/>
            <person name="Ghosh B.K."/>
            <person name="Sherman L.A."/>
            <person name="Smith R.D."/>
            <person name="Wilson R.K."/>
            <person name="Pakrasi H.B."/>
        </authorList>
    </citation>
    <scope>NUCLEOTIDE SEQUENCE [LARGE SCALE GENOMIC DNA]</scope>
    <source>
        <strain>ATCC 51142 / BH68</strain>
    </source>
</reference>
<feature type="chain" id="PRO_1000166288" description="Large ribosomal subunit protein uL15">
    <location>
        <begin position="1"/>
        <end position="158"/>
    </location>
</feature>
<feature type="region of interest" description="Disordered" evidence="2">
    <location>
        <begin position="1"/>
        <end position="53"/>
    </location>
</feature>
<feature type="region of interest" description="Disordered" evidence="2">
    <location>
        <begin position="138"/>
        <end position="158"/>
    </location>
</feature>
<feature type="compositionally biased region" description="Gly residues" evidence="2">
    <location>
        <begin position="23"/>
        <end position="35"/>
    </location>
</feature>
<feature type="compositionally biased region" description="Polar residues" evidence="2">
    <location>
        <begin position="145"/>
        <end position="158"/>
    </location>
</feature>
<accession>B1WQS8</accession>
<evidence type="ECO:0000255" key="1">
    <source>
        <dbReference type="HAMAP-Rule" id="MF_01341"/>
    </source>
</evidence>
<evidence type="ECO:0000256" key="2">
    <source>
        <dbReference type="SAM" id="MobiDB-lite"/>
    </source>
</evidence>
<evidence type="ECO:0000305" key="3"/>
<gene>
    <name evidence="1" type="primary">rplO</name>
    <name type="ordered locus">cce_4032</name>
</gene>
<protein>
    <recommendedName>
        <fullName evidence="1">Large ribosomal subunit protein uL15</fullName>
    </recommendedName>
    <alternativeName>
        <fullName evidence="3">50S ribosomal protein L15</fullName>
    </alternativeName>
</protein>
<sequence>MRIHEVNPQKGSTKRRRRIGRGISAGQGASGGFGMRGQKSRSGTGTKAGFEGGQMPLYRRVPKLKHFPLVNPSHYTIINVGKLNSLSPNTEVTLESLMEVGLITSNDGPLKVLGNGELTVPLTVRAPKFTASAKAKIESAGGSCQDLSDTSNAPSNNE</sequence>